<accession>Q6L0N2</accession>
<reference key="1">
    <citation type="journal article" date="2004" name="Proc. Natl. Acad. Sci. U.S.A.">
        <title>Genome sequence of Picrophilus torridus and its implications for life around pH 0.</title>
        <authorList>
            <person name="Fuetterer O."/>
            <person name="Angelov A."/>
            <person name="Liesegang H."/>
            <person name="Gottschalk G."/>
            <person name="Schleper C."/>
            <person name="Schepers B."/>
            <person name="Dock C."/>
            <person name="Antranikian G."/>
            <person name="Liebl W."/>
        </authorList>
    </citation>
    <scope>NUCLEOTIDE SEQUENCE [LARGE SCALE GENOMIC DNA]</scope>
    <source>
        <strain>ATCC 700027 / DSM 9790 / JCM 10055 / NBRC 100828 / KAW 2/3</strain>
    </source>
</reference>
<evidence type="ECO:0000255" key="1">
    <source>
        <dbReference type="HAMAP-Rule" id="MF_00751"/>
    </source>
</evidence>
<proteinExistence type="inferred from homology"/>
<organism>
    <name type="scientific">Picrophilus torridus (strain ATCC 700027 / DSM 9790 / JCM 10055 / NBRC 100828 / KAW 2/3)</name>
    <dbReference type="NCBI Taxonomy" id="1122961"/>
    <lineage>
        <taxon>Archaea</taxon>
        <taxon>Methanobacteriati</taxon>
        <taxon>Thermoplasmatota</taxon>
        <taxon>Thermoplasmata</taxon>
        <taxon>Thermoplasmatales</taxon>
        <taxon>Picrophilaceae</taxon>
        <taxon>Picrophilus</taxon>
    </lineage>
</organism>
<comment type="function">
    <text evidence="1">Involved in protein export. The function of the beta subunit is unknown, but it may be involved in stabilization of the trimeric complex.</text>
</comment>
<comment type="subunit">
    <text evidence="1">Component of the protein translocase complex. Heterotrimer consisting of alpha (SecY), beta (SecG) and gamma (SecE) subunits. Can form oligomers of the heterotrimer.</text>
</comment>
<comment type="subcellular location">
    <subcellularLocation>
        <location evidence="1">Cell membrane</location>
        <topology evidence="1">Single-pass membrane protein</topology>
    </subcellularLocation>
</comment>
<comment type="similarity">
    <text evidence="1">Belongs to the SEC61-beta family.</text>
</comment>
<gene>
    <name evidence="1" type="primary">secG</name>
    <name type="ordered locus">PTO0885</name>
</gene>
<keyword id="KW-1003">Cell membrane</keyword>
<keyword id="KW-0472">Membrane</keyword>
<keyword id="KW-0653">Protein transport</keyword>
<keyword id="KW-0811">Translocation</keyword>
<keyword id="KW-0812">Transmembrane</keyword>
<keyword id="KW-1133">Transmembrane helix</keyword>
<keyword id="KW-0813">Transport</keyword>
<feature type="chain" id="PRO_0000157272" description="Preprotein translocase subunit SecG">
    <location>
        <begin position="1"/>
        <end position="55"/>
    </location>
</feature>
<feature type="topological domain" description="Cytoplasmic" evidence="1">
    <location>
        <begin position="1"/>
        <end position="31"/>
    </location>
</feature>
<feature type="transmembrane region" description="Helical" evidence="1">
    <location>
        <begin position="32"/>
        <end position="51"/>
    </location>
</feature>
<feature type="topological domain" description="Extracellular" evidence="1">
    <location>
        <begin position="52"/>
        <end position="55"/>
    </location>
</feature>
<name>SECG_PICTO</name>
<sequence length="55" mass="6178">MPKNNTNENFQSGAGLIRYFNEEEIKGPALDPKLIIYIGIAMAVIVELAKIFWPV</sequence>
<protein>
    <recommendedName>
        <fullName evidence="1">Preprotein translocase subunit SecG</fullName>
    </recommendedName>
    <alternativeName>
        <fullName evidence="1">Protein transport protein Sec61 subunit beta homolog</fullName>
    </alternativeName>
</protein>
<dbReference type="EMBL" id="AE017261">
    <property type="protein sequence ID" value="AAT43470.1"/>
    <property type="molecule type" value="Genomic_DNA"/>
</dbReference>
<dbReference type="RefSeq" id="WP_011177686.1">
    <property type="nucleotide sequence ID" value="NC_005877.1"/>
</dbReference>
<dbReference type="PaxDb" id="263820-PTO0885"/>
<dbReference type="GeneID" id="2844139"/>
<dbReference type="KEGG" id="pto:PTO0885"/>
<dbReference type="eggNOG" id="arCOG02957">
    <property type="taxonomic scope" value="Archaea"/>
</dbReference>
<dbReference type="HOGENOM" id="CLU_208205_0_0_2"/>
<dbReference type="InParanoid" id="Q6L0N2"/>
<dbReference type="OrthoDB" id="43651at2157"/>
<dbReference type="Proteomes" id="UP000000438">
    <property type="component" value="Chromosome"/>
</dbReference>
<dbReference type="GO" id="GO:0005886">
    <property type="term" value="C:plasma membrane"/>
    <property type="evidence" value="ECO:0007669"/>
    <property type="project" value="UniProtKB-SubCell"/>
</dbReference>
<dbReference type="GO" id="GO:0015031">
    <property type="term" value="P:protein transport"/>
    <property type="evidence" value="ECO:0007669"/>
    <property type="project" value="UniProtKB-UniRule"/>
</dbReference>
<dbReference type="HAMAP" id="MF_00751">
    <property type="entry name" value="SecG"/>
    <property type="match status" value="1"/>
</dbReference>
<dbReference type="InterPro" id="IPR023531">
    <property type="entry name" value="Preprot_translocase_SecG"/>
</dbReference>
<dbReference type="InterPro" id="IPR016482">
    <property type="entry name" value="SecG/Sec61-beta/Sbh"/>
</dbReference>
<dbReference type="NCBIfam" id="NF002318">
    <property type="entry name" value="PRK01253.1"/>
    <property type="match status" value="1"/>
</dbReference>
<dbReference type="Pfam" id="PF03911">
    <property type="entry name" value="Sec61_beta"/>
    <property type="match status" value="1"/>
</dbReference>